<feature type="chain" id="PRO_0000198921" description="Rac-like GTP-binding protein ARAC7">
    <location>
        <begin position="1"/>
        <end position="209"/>
    </location>
</feature>
<feature type="short sequence motif" description="Effector region" evidence="2">
    <location>
        <begin position="35"/>
        <end position="43"/>
    </location>
</feature>
<feature type="binding site" evidence="1">
    <location>
        <begin position="13"/>
        <end position="20"/>
    </location>
    <ligand>
        <name>GTP</name>
        <dbReference type="ChEBI" id="CHEBI:37565"/>
    </ligand>
</feature>
<feature type="binding site" evidence="1">
    <location>
        <begin position="60"/>
        <end position="64"/>
    </location>
    <ligand>
        <name>GTP</name>
        <dbReference type="ChEBI" id="CHEBI:37565"/>
    </ligand>
</feature>
<feature type="binding site" evidence="1">
    <location>
        <begin position="118"/>
        <end position="121"/>
    </location>
    <ligand>
        <name>GTP</name>
        <dbReference type="ChEBI" id="CHEBI:37565"/>
    </ligand>
</feature>
<feature type="lipid moiety-binding region" description="S-palmitoyl cysteine" evidence="6">
    <location>
        <position position="196"/>
    </location>
</feature>
<feature type="lipid moiety-binding region" description="S-palmitoyl cysteine" evidence="6">
    <location>
        <position position="203"/>
    </location>
</feature>
<feature type="lipid moiety-binding region" description="S-palmitoyl cysteine" evidence="6">
    <location>
        <position position="206"/>
    </location>
</feature>
<feature type="mutagenesis site" description="Affects the membrane location." evidence="3">
    <original>C</original>
    <variation>S</variation>
    <location>
        <position position="196"/>
    </location>
</feature>
<feature type="mutagenesis site" description="Affects the membrane location." evidence="3">
    <original>C</original>
    <variation>S</variation>
    <location>
        <position position="203"/>
    </location>
</feature>
<feature type="mutagenesis site" description="Affects the membrane location." evidence="3">
    <original>C</original>
    <variation>S</variation>
    <location>
        <position position="206"/>
    </location>
</feature>
<feature type="strand" evidence="7">
    <location>
        <begin position="6"/>
        <end position="14"/>
    </location>
</feature>
<feature type="helix" evidence="7">
    <location>
        <begin position="19"/>
        <end position="28"/>
    </location>
</feature>
<feature type="strand" evidence="7">
    <location>
        <begin position="43"/>
        <end position="48"/>
    </location>
</feature>
<feature type="strand" evidence="7">
    <location>
        <begin position="53"/>
        <end position="59"/>
    </location>
</feature>
<feature type="helix" evidence="7">
    <location>
        <begin position="73"/>
        <end position="75"/>
    </location>
</feature>
<feature type="strand" evidence="7">
    <location>
        <begin position="79"/>
        <end position="86"/>
    </location>
</feature>
<feature type="helix" evidence="7">
    <location>
        <begin position="90"/>
        <end position="98"/>
    </location>
</feature>
<feature type="helix" evidence="7">
    <location>
        <begin position="100"/>
        <end position="107"/>
    </location>
</feature>
<feature type="strand" evidence="7">
    <location>
        <begin position="113"/>
        <end position="118"/>
    </location>
</feature>
<feature type="helix" evidence="7">
    <location>
        <begin position="120"/>
        <end position="123"/>
    </location>
</feature>
<feature type="helix" evidence="7">
    <location>
        <begin position="126"/>
        <end position="131"/>
    </location>
</feature>
<feature type="helix" evidence="7">
    <location>
        <begin position="138"/>
        <end position="148"/>
    </location>
</feature>
<feature type="strand" evidence="7">
    <location>
        <begin position="151"/>
        <end position="155"/>
    </location>
</feature>
<feature type="turn" evidence="7">
    <location>
        <begin position="158"/>
        <end position="160"/>
    </location>
</feature>
<feature type="helix" evidence="7">
    <location>
        <begin position="164"/>
        <end position="176"/>
    </location>
</feature>
<dbReference type="EMBL" id="AF079484">
    <property type="protein sequence ID" value="AAC63013.1"/>
    <property type="molecule type" value="mRNA"/>
</dbReference>
<dbReference type="EMBL" id="AF115474">
    <property type="protein sequence ID" value="AAF40246.1"/>
    <property type="molecule type" value="Genomic_DNA"/>
</dbReference>
<dbReference type="EMBL" id="AL078469">
    <property type="protein sequence ID" value="CAB43909.1"/>
    <property type="molecule type" value="Genomic_DNA"/>
</dbReference>
<dbReference type="EMBL" id="AL161574">
    <property type="protein sequence ID" value="CAB79653.1"/>
    <property type="molecule type" value="Genomic_DNA"/>
</dbReference>
<dbReference type="EMBL" id="CP002687">
    <property type="protein sequence ID" value="AEE85566.1"/>
    <property type="molecule type" value="Genomic_DNA"/>
</dbReference>
<dbReference type="PIR" id="T08950">
    <property type="entry name" value="T08950"/>
</dbReference>
<dbReference type="RefSeq" id="NP_194624.1">
    <property type="nucleotide sequence ID" value="NM_119039.3"/>
</dbReference>
<dbReference type="PDB" id="2J0V">
    <property type="method" value="X-ray"/>
    <property type="resolution" value="1.78 A"/>
    <property type="chains" value="A/B/C/D=1-209"/>
</dbReference>
<dbReference type="PDBsum" id="2J0V"/>
<dbReference type="SMR" id="O82480"/>
<dbReference type="FunCoup" id="O82480">
    <property type="interactions" value="2749"/>
</dbReference>
<dbReference type="STRING" id="3702.O82480"/>
<dbReference type="PaxDb" id="3702-AT4G28950.1"/>
<dbReference type="ProteomicsDB" id="236691"/>
<dbReference type="EnsemblPlants" id="AT4G28950.1">
    <property type="protein sequence ID" value="AT4G28950.1"/>
    <property type="gene ID" value="AT4G28950"/>
</dbReference>
<dbReference type="GeneID" id="829016"/>
<dbReference type="Gramene" id="AT4G28950.1">
    <property type="protein sequence ID" value="AT4G28950.1"/>
    <property type="gene ID" value="AT4G28950"/>
</dbReference>
<dbReference type="KEGG" id="ath:AT4G28950"/>
<dbReference type="Araport" id="AT4G28950"/>
<dbReference type="TAIR" id="AT4G28950">
    <property type="gene designation" value="ROP9"/>
</dbReference>
<dbReference type="eggNOG" id="KOG0393">
    <property type="taxonomic scope" value="Eukaryota"/>
</dbReference>
<dbReference type="HOGENOM" id="CLU_041217_21_3_1"/>
<dbReference type="InParanoid" id="O82480"/>
<dbReference type="OMA" id="PRHKDVT"/>
<dbReference type="OrthoDB" id="8830751at2759"/>
<dbReference type="PhylomeDB" id="O82480"/>
<dbReference type="EvolutionaryTrace" id="O82480"/>
<dbReference type="PRO" id="PR:O82480"/>
<dbReference type="Proteomes" id="UP000006548">
    <property type="component" value="Chromosome 4"/>
</dbReference>
<dbReference type="ExpressionAtlas" id="O82480">
    <property type="expression patterns" value="baseline and differential"/>
</dbReference>
<dbReference type="GO" id="GO:0005886">
    <property type="term" value="C:plasma membrane"/>
    <property type="evidence" value="ECO:0000314"/>
    <property type="project" value="TAIR"/>
</dbReference>
<dbReference type="GO" id="GO:0005525">
    <property type="term" value="F:GTP binding"/>
    <property type="evidence" value="ECO:0007669"/>
    <property type="project" value="UniProtKB-KW"/>
</dbReference>
<dbReference type="GO" id="GO:0003924">
    <property type="term" value="F:GTPase activity"/>
    <property type="evidence" value="ECO:0007669"/>
    <property type="project" value="InterPro"/>
</dbReference>
<dbReference type="GO" id="GO:0009738">
    <property type="term" value="P:abscisic acid-activated signaling pathway"/>
    <property type="evidence" value="ECO:0007669"/>
    <property type="project" value="UniProtKB-KW"/>
</dbReference>
<dbReference type="GO" id="GO:0007264">
    <property type="term" value="P:small GTPase-mediated signal transduction"/>
    <property type="evidence" value="ECO:0007669"/>
    <property type="project" value="InterPro"/>
</dbReference>
<dbReference type="CDD" id="cd04133">
    <property type="entry name" value="Rop_like"/>
    <property type="match status" value="1"/>
</dbReference>
<dbReference type="FunFam" id="3.40.50.300:FF:000797">
    <property type="entry name" value="Rac-like GTP-binding protein ARAC7"/>
    <property type="match status" value="1"/>
</dbReference>
<dbReference type="Gene3D" id="3.40.50.300">
    <property type="entry name" value="P-loop containing nucleotide triphosphate hydrolases"/>
    <property type="match status" value="1"/>
</dbReference>
<dbReference type="InterPro" id="IPR027417">
    <property type="entry name" value="P-loop_NTPase"/>
</dbReference>
<dbReference type="InterPro" id="IPR005225">
    <property type="entry name" value="Small_GTP-bd"/>
</dbReference>
<dbReference type="InterPro" id="IPR001806">
    <property type="entry name" value="Small_GTPase"/>
</dbReference>
<dbReference type="InterPro" id="IPR003578">
    <property type="entry name" value="Small_GTPase_Rho"/>
</dbReference>
<dbReference type="NCBIfam" id="TIGR00231">
    <property type="entry name" value="small_GTP"/>
    <property type="match status" value="1"/>
</dbReference>
<dbReference type="PANTHER" id="PTHR24072">
    <property type="entry name" value="RHO FAMILY GTPASE"/>
    <property type="match status" value="1"/>
</dbReference>
<dbReference type="Pfam" id="PF00071">
    <property type="entry name" value="Ras"/>
    <property type="match status" value="1"/>
</dbReference>
<dbReference type="PRINTS" id="PR00449">
    <property type="entry name" value="RASTRNSFRMNG"/>
</dbReference>
<dbReference type="SMART" id="SM00175">
    <property type="entry name" value="RAB"/>
    <property type="match status" value="1"/>
</dbReference>
<dbReference type="SMART" id="SM00173">
    <property type="entry name" value="RAS"/>
    <property type="match status" value="1"/>
</dbReference>
<dbReference type="SMART" id="SM00174">
    <property type="entry name" value="RHO"/>
    <property type="match status" value="1"/>
</dbReference>
<dbReference type="SUPFAM" id="SSF52540">
    <property type="entry name" value="P-loop containing nucleoside triphosphate hydrolases"/>
    <property type="match status" value="1"/>
</dbReference>
<dbReference type="PROSITE" id="PS51420">
    <property type="entry name" value="RHO"/>
    <property type="match status" value="1"/>
</dbReference>
<name>RAC7_ARATH</name>
<gene>
    <name type="primary">ARAC7</name>
    <name type="synonym">ROP9</name>
    <name type="ordered locus">At4g28950</name>
    <name type="ORF">F25O24.70</name>
</gene>
<protein>
    <recommendedName>
        <fullName>Rac-like GTP-binding protein ARAC7</fullName>
    </recommendedName>
    <alternativeName>
        <fullName>GTPase protein ROP9</fullName>
    </alternativeName>
</protein>
<reference key="1">
    <citation type="journal article" date="2000" name="Genetics">
        <title>Genetic structure and evolution of RAC-GTPases in Arabidopsis thaliana.</title>
        <authorList>
            <person name="Winge P."/>
            <person name="Brembu T."/>
            <person name="Kristensen R."/>
            <person name="Bones A.M."/>
        </authorList>
    </citation>
    <scope>NUCLEOTIDE SEQUENCE [MRNA]</scope>
    <source>
        <strain>cv. Columbia</strain>
    </source>
</reference>
<reference key="2">
    <citation type="journal article" date="1999" name="Nature">
        <title>Sequence and analysis of chromosome 4 of the plant Arabidopsis thaliana.</title>
        <authorList>
            <person name="Mayer K.F.X."/>
            <person name="Schueller C."/>
            <person name="Wambutt R."/>
            <person name="Murphy G."/>
            <person name="Volckaert G."/>
            <person name="Pohl T."/>
            <person name="Duesterhoeft A."/>
            <person name="Stiekema W."/>
            <person name="Entian K.-D."/>
            <person name="Terryn N."/>
            <person name="Harris B."/>
            <person name="Ansorge W."/>
            <person name="Brandt P."/>
            <person name="Grivell L.A."/>
            <person name="Rieger M."/>
            <person name="Weichselgartner M."/>
            <person name="de Simone V."/>
            <person name="Obermaier B."/>
            <person name="Mache R."/>
            <person name="Mueller M."/>
            <person name="Kreis M."/>
            <person name="Delseny M."/>
            <person name="Puigdomenech P."/>
            <person name="Watson M."/>
            <person name="Schmidtheini T."/>
            <person name="Reichert B."/>
            <person name="Portetelle D."/>
            <person name="Perez-Alonso M."/>
            <person name="Boutry M."/>
            <person name="Bancroft I."/>
            <person name="Vos P."/>
            <person name="Hoheisel J."/>
            <person name="Zimmermann W."/>
            <person name="Wedler H."/>
            <person name="Ridley P."/>
            <person name="Langham S.-A."/>
            <person name="McCullagh B."/>
            <person name="Bilham L."/>
            <person name="Robben J."/>
            <person name="van der Schueren J."/>
            <person name="Grymonprez B."/>
            <person name="Chuang Y.-J."/>
            <person name="Vandenbussche F."/>
            <person name="Braeken M."/>
            <person name="Weltjens I."/>
            <person name="Voet M."/>
            <person name="Bastiaens I."/>
            <person name="Aert R."/>
            <person name="Defoor E."/>
            <person name="Weitzenegger T."/>
            <person name="Bothe G."/>
            <person name="Ramsperger U."/>
            <person name="Hilbert H."/>
            <person name="Braun M."/>
            <person name="Holzer E."/>
            <person name="Brandt A."/>
            <person name="Peters S."/>
            <person name="van Staveren M."/>
            <person name="Dirkse W."/>
            <person name="Mooijman P."/>
            <person name="Klein Lankhorst R."/>
            <person name="Rose M."/>
            <person name="Hauf J."/>
            <person name="Koetter P."/>
            <person name="Berneiser S."/>
            <person name="Hempel S."/>
            <person name="Feldpausch M."/>
            <person name="Lamberth S."/>
            <person name="Van den Daele H."/>
            <person name="De Keyser A."/>
            <person name="Buysshaert C."/>
            <person name="Gielen J."/>
            <person name="Villarroel R."/>
            <person name="De Clercq R."/>
            <person name="van Montagu M."/>
            <person name="Rogers J."/>
            <person name="Cronin A."/>
            <person name="Quail M.A."/>
            <person name="Bray-Allen S."/>
            <person name="Clark L."/>
            <person name="Doggett J."/>
            <person name="Hall S."/>
            <person name="Kay M."/>
            <person name="Lennard N."/>
            <person name="McLay K."/>
            <person name="Mayes R."/>
            <person name="Pettett A."/>
            <person name="Rajandream M.A."/>
            <person name="Lyne M."/>
            <person name="Benes V."/>
            <person name="Rechmann S."/>
            <person name="Borkova D."/>
            <person name="Bloecker H."/>
            <person name="Scharfe M."/>
            <person name="Grimm M."/>
            <person name="Loehnert T.-H."/>
            <person name="Dose S."/>
            <person name="de Haan M."/>
            <person name="Maarse A.C."/>
            <person name="Schaefer M."/>
            <person name="Mueller-Auer S."/>
            <person name="Gabel C."/>
            <person name="Fuchs M."/>
            <person name="Fartmann B."/>
            <person name="Granderath K."/>
            <person name="Dauner D."/>
            <person name="Herzl A."/>
            <person name="Neumann S."/>
            <person name="Argiriou A."/>
            <person name="Vitale D."/>
            <person name="Liguori R."/>
            <person name="Piravandi E."/>
            <person name="Massenet O."/>
            <person name="Quigley F."/>
            <person name="Clabauld G."/>
            <person name="Muendlein A."/>
            <person name="Felber R."/>
            <person name="Schnabl S."/>
            <person name="Hiller R."/>
            <person name="Schmidt W."/>
            <person name="Lecharny A."/>
            <person name="Aubourg S."/>
            <person name="Chefdor F."/>
            <person name="Cooke R."/>
            <person name="Berger C."/>
            <person name="Monfort A."/>
            <person name="Casacuberta E."/>
            <person name="Gibbons T."/>
            <person name="Weber N."/>
            <person name="Vandenbol M."/>
            <person name="Bargues M."/>
            <person name="Terol J."/>
            <person name="Torres A."/>
            <person name="Perez-Perez A."/>
            <person name="Purnelle B."/>
            <person name="Bent E."/>
            <person name="Johnson S."/>
            <person name="Tacon D."/>
            <person name="Jesse T."/>
            <person name="Heijnen L."/>
            <person name="Schwarz S."/>
            <person name="Scholler P."/>
            <person name="Heber S."/>
            <person name="Francs P."/>
            <person name="Bielke C."/>
            <person name="Frishman D."/>
            <person name="Haase D."/>
            <person name="Lemcke K."/>
            <person name="Mewes H.-W."/>
            <person name="Stocker S."/>
            <person name="Zaccaria P."/>
            <person name="Bevan M."/>
            <person name="Wilson R.K."/>
            <person name="de la Bastide M."/>
            <person name="Habermann K."/>
            <person name="Parnell L."/>
            <person name="Dedhia N."/>
            <person name="Gnoj L."/>
            <person name="Schutz K."/>
            <person name="Huang E."/>
            <person name="Spiegel L."/>
            <person name="Sekhon M."/>
            <person name="Murray J."/>
            <person name="Sheet P."/>
            <person name="Cordes M."/>
            <person name="Abu-Threideh J."/>
            <person name="Stoneking T."/>
            <person name="Kalicki J."/>
            <person name="Graves T."/>
            <person name="Harmon G."/>
            <person name="Edwards J."/>
            <person name="Latreille P."/>
            <person name="Courtney L."/>
            <person name="Cloud J."/>
            <person name="Abbott A."/>
            <person name="Scott K."/>
            <person name="Johnson D."/>
            <person name="Minx P."/>
            <person name="Bentley D."/>
            <person name="Fulton B."/>
            <person name="Miller N."/>
            <person name="Greco T."/>
            <person name="Kemp K."/>
            <person name="Kramer J."/>
            <person name="Fulton L."/>
            <person name="Mardis E."/>
            <person name="Dante M."/>
            <person name="Pepin K."/>
            <person name="Hillier L.W."/>
            <person name="Nelson J."/>
            <person name="Spieth J."/>
            <person name="Ryan E."/>
            <person name="Andrews S."/>
            <person name="Geisel C."/>
            <person name="Layman D."/>
            <person name="Du H."/>
            <person name="Ali J."/>
            <person name="Berghoff A."/>
            <person name="Jones K."/>
            <person name="Drone K."/>
            <person name="Cotton M."/>
            <person name="Joshu C."/>
            <person name="Antonoiu B."/>
            <person name="Zidanic M."/>
            <person name="Strong C."/>
            <person name="Sun H."/>
            <person name="Lamar B."/>
            <person name="Yordan C."/>
            <person name="Ma P."/>
            <person name="Zhong J."/>
            <person name="Preston R."/>
            <person name="Vil D."/>
            <person name="Shekher M."/>
            <person name="Matero A."/>
            <person name="Shah R."/>
            <person name="Swaby I.K."/>
            <person name="O'Shaughnessy A."/>
            <person name="Rodriguez M."/>
            <person name="Hoffman J."/>
            <person name="Till S."/>
            <person name="Granat S."/>
            <person name="Shohdy N."/>
            <person name="Hasegawa A."/>
            <person name="Hameed A."/>
            <person name="Lodhi M."/>
            <person name="Johnson A."/>
            <person name="Chen E."/>
            <person name="Marra M.A."/>
            <person name="Martienssen R."/>
            <person name="McCombie W.R."/>
        </authorList>
    </citation>
    <scope>NUCLEOTIDE SEQUENCE [LARGE SCALE GENOMIC DNA]</scope>
    <source>
        <strain>cv. Columbia</strain>
    </source>
</reference>
<reference key="3">
    <citation type="journal article" date="2017" name="Plant J.">
        <title>Araport11: a complete reannotation of the Arabidopsis thaliana reference genome.</title>
        <authorList>
            <person name="Cheng C.Y."/>
            <person name="Krishnakumar V."/>
            <person name="Chan A.P."/>
            <person name="Thibaud-Nissen F."/>
            <person name="Schobel S."/>
            <person name="Town C.D."/>
        </authorList>
    </citation>
    <scope>GENOME REANNOTATION</scope>
    <source>
        <strain>cv. Columbia</strain>
    </source>
</reference>
<reference key="4">
    <citation type="journal article" date="2002" name="Plant Cell">
        <title>A cell-specific, prenylation-independent mechanism regulates targeting of type II RACs.</title>
        <authorList>
            <person name="Lavy M."/>
            <person name="Bracha-Drori K."/>
            <person name="Sternberg H."/>
            <person name="Yalovsky S."/>
        </authorList>
    </citation>
    <scope>PALMITOYLATION AT CYS-196; CYS-203 AND CYS-206</scope>
    <scope>SUBCELLULAR LOCATION</scope>
    <scope>MUTAGENESIS OF CYS-196; CYS-203 AND CYS-206</scope>
</reference>
<reference key="5">
    <citation type="journal article" date="2002" name="Plant Cell">
        <title>Plasma membrane-associated ROP10 small GTPase is a specific negative regulator of abscisic acid responses in Arabidopsis.</title>
        <authorList>
            <person name="Zheng Z.-L."/>
            <person name="Nafisi M."/>
            <person name="Tam A."/>
            <person name="Li H."/>
            <person name="Crowell D.N."/>
            <person name="Chary S.N."/>
            <person name="Schroeder J.I."/>
            <person name="Shen J."/>
            <person name="Yang Z."/>
        </authorList>
    </citation>
    <scope>FUNCTION</scope>
</reference>
<evidence type="ECO:0000250" key="1"/>
<evidence type="ECO:0000255" key="2"/>
<evidence type="ECO:0000269" key="3">
    <source>
    </source>
</evidence>
<evidence type="ECO:0000269" key="4">
    <source>
    </source>
</evidence>
<evidence type="ECO:0000305" key="5"/>
<evidence type="ECO:0000305" key="6">
    <source>
    </source>
</evidence>
<evidence type="ECO:0007829" key="7">
    <source>
        <dbReference type="PDB" id="2J0V"/>
    </source>
</evidence>
<comment type="function">
    <text evidence="4">Acts as a negative regulator of abscisic acid (ABA) responses.</text>
</comment>
<comment type="subcellular location">
    <subcellularLocation>
        <location evidence="3">Membrane</location>
        <topology evidence="3">Lipid-anchor</topology>
    </subcellularLocation>
</comment>
<comment type="PTM">
    <text evidence="3">Although this sequence has a C-terminal -CXXX, it is palmitoylated at Cys-206, rather than prenylated.</text>
</comment>
<comment type="similarity">
    <text evidence="5">Belongs to the small GTPase superfamily. Rho family.</text>
</comment>
<organism>
    <name type="scientific">Arabidopsis thaliana</name>
    <name type="common">Mouse-ear cress</name>
    <dbReference type="NCBI Taxonomy" id="3702"/>
    <lineage>
        <taxon>Eukaryota</taxon>
        <taxon>Viridiplantae</taxon>
        <taxon>Streptophyta</taxon>
        <taxon>Embryophyta</taxon>
        <taxon>Tracheophyta</taxon>
        <taxon>Spermatophyta</taxon>
        <taxon>Magnoliopsida</taxon>
        <taxon>eudicotyledons</taxon>
        <taxon>Gunneridae</taxon>
        <taxon>Pentapetalae</taxon>
        <taxon>rosids</taxon>
        <taxon>malvids</taxon>
        <taxon>Brassicales</taxon>
        <taxon>Brassicaceae</taxon>
        <taxon>Camelineae</taxon>
        <taxon>Arabidopsis</taxon>
    </lineage>
</organism>
<keyword id="KW-0002">3D-structure</keyword>
<keyword id="KW-0938">Abscisic acid signaling pathway</keyword>
<keyword id="KW-0342">GTP-binding</keyword>
<keyword id="KW-0449">Lipoprotein</keyword>
<keyword id="KW-0472">Membrane</keyword>
<keyword id="KW-0547">Nucleotide-binding</keyword>
<keyword id="KW-0564">Palmitate</keyword>
<keyword id="KW-1185">Reference proteome</keyword>
<proteinExistence type="evidence at protein level"/>
<accession>O82480</accession>
<sequence length="209" mass="23043">MSASKFIKCVTVGDGAVGKTCMLICYTSNKFPTDYIPTVFDNFSANVAVDGQIVNLGLWDTAGQEDYSRLRPLSYRGADIFVLAFSLISKASYENVLKKWMPELRRFAPNVPIVLVGTKLDLRDDKGYLADHTNVITSTQGEELRKQIGAAAYIECSSKTQQNVKAVFDTAIKVVLQPPRRKEVPRRRKNHRRSGCSIASIVCGGCTAA</sequence>